<reference key="1">
    <citation type="journal article" date="2007" name="Nat. Biotechnol.">
        <title>Comparative analysis of the complete genome sequence of the plant growth-promoting bacterium Bacillus amyloliquefaciens FZB42.</title>
        <authorList>
            <person name="Chen X.H."/>
            <person name="Koumoutsi A."/>
            <person name="Scholz R."/>
            <person name="Eisenreich A."/>
            <person name="Schneider K."/>
            <person name="Heinemeyer I."/>
            <person name="Morgenstern B."/>
            <person name="Voss B."/>
            <person name="Hess W.R."/>
            <person name="Reva O."/>
            <person name="Junge H."/>
            <person name="Voigt B."/>
            <person name="Jungblut P.R."/>
            <person name="Vater J."/>
            <person name="Suessmuth R."/>
            <person name="Liesegang H."/>
            <person name="Strittmatter A."/>
            <person name="Gottschalk G."/>
            <person name="Borriss R."/>
        </authorList>
    </citation>
    <scope>NUCLEOTIDE SEQUENCE [LARGE SCALE GENOMIC DNA]</scope>
    <source>
        <strain>DSM 23117 / BGSC 10A6 / LMG 26770 / FZB42</strain>
    </source>
</reference>
<reference key="2">
    <citation type="journal article" date="2006" name="J. Bacteriol.">
        <title>Structural and functional characterization of three polyketide synthase gene clusters in Bacillus amyloliquefaciens FZB 42.</title>
        <authorList>
            <person name="Chen X.-H."/>
            <person name="Vater J."/>
            <person name="Piel J."/>
            <person name="Franke P."/>
            <person name="Scholz R."/>
            <person name="Schneider K."/>
            <person name="Koumoutsi A."/>
            <person name="Hitzeroth G."/>
            <person name="Grammel N."/>
            <person name="Strittmatter A.W."/>
            <person name="Gottschalk G."/>
            <person name="Suessmuth R.D."/>
            <person name="Borriss R."/>
        </authorList>
    </citation>
    <scope>PATHWAY</scope>
    <scope>FUNCTION IN BACILLAENE BIOSYNTHESIS</scope>
</reference>
<organism>
    <name type="scientific">Bacillus velezensis (strain DSM 23117 / BGSC 10A6 / LMG 26770 / FZB42)</name>
    <name type="common">Bacillus amyloliquefaciens subsp. plantarum</name>
    <dbReference type="NCBI Taxonomy" id="326423"/>
    <lineage>
        <taxon>Bacteria</taxon>
        <taxon>Bacillati</taxon>
        <taxon>Bacillota</taxon>
        <taxon>Bacilli</taxon>
        <taxon>Bacillales</taxon>
        <taxon>Bacillaceae</taxon>
        <taxon>Bacillus</taxon>
        <taxon>Bacillus amyloliquefaciens group</taxon>
    </lineage>
</organism>
<feature type="chain" id="PRO_0000388003" description="Polyketide biosynthesis malonyl CoA-acyl carrier protein transacylase BaeC">
    <location>
        <begin position="1"/>
        <end position="289"/>
    </location>
</feature>
<feature type="active site" evidence="1">
    <location>
        <position position="87"/>
    </location>
</feature>
<feature type="active site" evidence="1">
    <location>
        <position position="193"/>
    </location>
</feature>
<protein>
    <recommendedName>
        <fullName>Polyketide biosynthesis malonyl CoA-acyl carrier protein transacylase BaeC</fullName>
        <shortName>AT</shortName>
        <ecNumber>2.3.1.39</ecNumber>
    </recommendedName>
</protein>
<name>BAEC_BACVZ</name>
<sequence length="289" mass="32318">MITYLFPGQGSQKQGMGSSLFDEFKDLTEQADETLGYSMKRLCLENPYSNLHKTQFTQPALYVVNVLSYLKKIQDNDIKPDYVAGHSLGEYNALFAAGAFDFITGLQLVRKRGELMSMATDGKMAAVMGLTAAQVSDALQTHGLHTIDIANMNSPHQVVISGRKEDIERAKSVFEGLKDVTMFHPLNVSGAFHSRYMSEAKQEFEKFLQSFHFSAISIPVISNVHARPYEQDGIHSVLADQIDHSVRWNDSIRYLLDKGRMEFEEVGPGHVLTGLIHRIKNETEASPAM</sequence>
<proteinExistence type="evidence at protein level"/>
<comment type="function">
    <text evidence="1 2">Involved in some intermediate steps for the synthesis of the antibiotic polyketide bacillaene which is involved in secondary metabolism. It catalyzes the transfer of the malonyl-CoA group to the acyl-carrier-protein AcpK (Mal-AcpK) (By similarity).</text>
</comment>
<comment type="catalytic activity">
    <reaction>
        <text>holo-[ACP] + malonyl-CoA = malonyl-[ACP] + CoA</text>
        <dbReference type="Rhea" id="RHEA:41792"/>
        <dbReference type="Rhea" id="RHEA-COMP:9623"/>
        <dbReference type="Rhea" id="RHEA-COMP:9685"/>
        <dbReference type="ChEBI" id="CHEBI:57287"/>
        <dbReference type="ChEBI" id="CHEBI:57384"/>
        <dbReference type="ChEBI" id="CHEBI:64479"/>
        <dbReference type="ChEBI" id="CHEBI:78449"/>
        <dbReference type="EC" id="2.3.1.39"/>
    </reaction>
</comment>
<comment type="pathway">
    <text evidence="2">Antibiotic biosynthesis; bacillaene biosynthesis.</text>
</comment>
<comment type="subcellular location">
    <subcellularLocation>
        <location evidence="1">Cytoplasm</location>
    </subcellularLocation>
</comment>
<comment type="similarity">
    <text evidence="3">Belongs to the FabD family.</text>
</comment>
<dbReference type="EC" id="2.3.1.39"/>
<dbReference type="EMBL" id="CP000560">
    <property type="protein sequence ID" value="ABS74054.1"/>
    <property type="molecule type" value="Genomic_DNA"/>
</dbReference>
<dbReference type="SMR" id="A7Z4X8"/>
<dbReference type="GeneID" id="93080825"/>
<dbReference type="KEGG" id="bay:RBAM_016910"/>
<dbReference type="HOGENOM" id="CLU_030558_1_3_9"/>
<dbReference type="UniPathway" id="UPA01003"/>
<dbReference type="Proteomes" id="UP000001120">
    <property type="component" value="Chromosome"/>
</dbReference>
<dbReference type="GO" id="GO:0005829">
    <property type="term" value="C:cytosol"/>
    <property type="evidence" value="ECO:0007669"/>
    <property type="project" value="TreeGrafter"/>
</dbReference>
<dbReference type="GO" id="GO:0004314">
    <property type="term" value="F:[acyl-carrier-protein] S-malonyltransferase activity"/>
    <property type="evidence" value="ECO:0007669"/>
    <property type="project" value="UniProtKB-EC"/>
</dbReference>
<dbReference type="GO" id="GO:0017000">
    <property type="term" value="P:antibiotic biosynthetic process"/>
    <property type="evidence" value="ECO:0007669"/>
    <property type="project" value="UniProtKB-KW"/>
</dbReference>
<dbReference type="GO" id="GO:0006633">
    <property type="term" value="P:fatty acid biosynthetic process"/>
    <property type="evidence" value="ECO:0007669"/>
    <property type="project" value="TreeGrafter"/>
</dbReference>
<dbReference type="Gene3D" id="3.30.70.250">
    <property type="entry name" value="Malonyl-CoA ACP transacylase, ACP-binding"/>
    <property type="match status" value="1"/>
</dbReference>
<dbReference type="Gene3D" id="3.40.366.10">
    <property type="entry name" value="Malonyl-Coenzyme A Acyl Carrier Protein, domain 2"/>
    <property type="match status" value="1"/>
</dbReference>
<dbReference type="InterPro" id="IPR001227">
    <property type="entry name" value="Ac_transferase_dom_sf"/>
</dbReference>
<dbReference type="InterPro" id="IPR014043">
    <property type="entry name" value="Acyl_transferase_dom"/>
</dbReference>
<dbReference type="InterPro" id="IPR016035">
    <property type="entry name" value="Acyl_Trfase/lysoPLipase"/>
</dbReference>
<dbReference type="InterPro" id="IPR050858">
    <property type="entry name" value="Mal-CoA-ACP_Trans/PKS_FabD"/>
</dbReference>
<dbReference type="InterPro" id="IPR024925">
    <property type="entry name" value="Malonyl_CoA-ACP_transAc"/>
</dbReference>
<dbReference type="InterPro" id="IPR004410">
    <property type="entry name" value="Malonyl_CoA-ACP_transAc_FabD"/>
</dbReference>
<dbReference type="InterPro" id="IPR016036">
    <property type="entry name" value="Malonyl_transacylase_ACP-bd"/>
</dbReference>
<dbReference type="NCBIfam" id="TIGR00128">
    <property type="entry name" value="fabD"/>
    <property type="match status" value="1"/>
</dbReference>
<dbReference type="PANTHER" id="PTHR42681">
    <property type="entry name" value="MALONYL-COA-ACYL CARRIER PROTEIN TRANSACYLASE, MITOCHONDRIAL"/>
    <property type="match status" value="1"/>
</dbReference>
<dbReference type="PANTHER" id="PTHR42681:SF1">
    <property type="entry name" value="MALONYL-COA-ACYL CARRIER PROTEIN TRANSACYLASE, MITOCHONDRIAL"/>
    <property type="match status" value="1"/>
</dbReference>
<dbReference type="Pfam" id="PF00698">
    <property type="entry name" value="Acyl_transf_1"/>
    <property type="match status" value="1"/>
</dbReference>
<dbReference type="PIRSF" id="PIRSF000446">
    <property type="entry name" value="Mct"/>
    <property type="match status" value="1"/>
</dbReference>
<dbReference type="SMART" id="SM00827">
    <property type="entry name" value="PKS_AT"/>
    <property type="match status" value="1"/>
</dbReference>
<dbReference type="SUPFAM" id="SSF52151">
    <property type="entry name" value="FabD/lysophospholipase-like"/>
    <property type="match status" value="1"/>
</dbReference>
<dbReference type="SUPFAM" id="SSF55048">
    <property type="entry name" value="Probable ACP-binding domain of malonyl-CoA ACP transacylase"/>
    <property type="match status" value="1"/>
</dbReference>
<keyword id="KW-0012">Acyltransferase</keyword>
<keyword id="KW-0045">Antibiotic biosynthesis</keyword>
<keyword id="KW-0963">Cytoplasm</keyword>
<keyword id="KW-0808">Transferase</keyword>
<gene>
    <name type="primary">baeC</name>
    <name type="ordered locus">RBAM_016910</name>
</gene>
<accession>A7Z4X8</accession>
<evidence type="ECO:0000250" key="1"/>
<evidence type="ECO:0000269" key="2">
    <source>
    </source>
</evidence>
<evidence type="ECO:0000305" key="3"/>